<keyword id="KW-0472">Membrane</keyword>
<keyword id="KW-1185">Reference proteome</keyword>
<keyword id="KW-0735">Signal-anchor</keyword>
<keyword id="KW-0812">Transmembrane</keyword>
<keyword id="KW-1133">Transmembrane helix</keyword>
<comment type="function">
    <text evidence="1 2">May act as a bridging protein that binds pectin and other cell wall polysaccharides. Probably involved in maintaining esterification of pectins (By similarity). May be involved in the specific O-acetylation of cell wall polymers (By similarity).</text>
</comment>
<comment type="subcellular location">
    <subcellularLocation>
        <location evidence="5">Membrane</location>
        <topology evidence="5">Single-pass type II membrane protein</topology>
    </subcellularLocation>
</comment>
<comment type="miscellaneous">
    <text evidence="6">Contains 2 motifs that are conserved in esterases, but it is unlikely that this protein belongs to the catalytically active pectin esterases.</text>
</comment>
<comment type="similarity">
    <text evidence="5">Belongs to the PC-esterase family. TBL subfamily.</text>
</comment>
<reference key="1">
    <citation type="journal article" date="2000" name="Nature">
        <title>Sequence and analysis of chromosome 5 of the plant Arabidopsis thaliana.</title>
        <authorList>
            <person name="Tabata S."/>
            <person name="Kaneko T."/>
            <person name="Nakamura Y."/>
            <person name="Kotani H."/>
            <person name="Kato T."/>
            <person name="Asamizu E."/>
            <person name="Miyajima N."/>
            <person name="Sasamoto S."/>
            <person name="Kimura T."/>
            <person name="Hosouchi T."/>
            <person name="Kawashima K."/>
            <person name="Kohara M."/>
            <person name="Matsumoto M."/>
            <person name="Matsuno A."/>
            <person name="Muraki A."/>
            <person name="Nakayama S."/>
            <person name="Nakazaki N."/>
            <person name="Naruo K."/>
            <person name="Okumura S."/>
            <person name="Shinpo S."/>
            <person name="Takeuchi C."/>
            <person name="Wada T."/>
            <person name="Watanabe A."/>
            <person name="Yamada M."/>
            <person name="Yasuda M."/>
            <person name="Sato S."/>
            <person name="de la Bastide M."/>
            <person name="Huang E."/>
            <person name="Spiegel L."/>
            <person name="Gnoj L."/>
            <person name="O'Shaughnessy A."/>
            <person name="Preston R."/>
            <person name="Habermann K."/>
            <person name="Murray J."/>
            <person name="Johnson D."/>
            <person name="Rohlfing T."/>
            <person name="Nelson J."/>
            <person name="Stoneking T."/>
            <person name="Pepin K."/>
            <person name="Spieth J."/>
            <person name="Sekhon M."/>
            <person name="Armstrong J."/>
            <person name="Becker M."/>
            <person name="Belter E."/>
            <person name="Cordum H."/>
            <person name="Cordes M."/>
            <person name="Courtney L."/>
            <person name="Courtney W."/>
            <person name="Dante M."/>
            <person name="Du H."/>
            <person name="Edwards J."/>
            <person name="Fryman J."/>
            <person name="Haakensen B."/>
            <person name="Lamar E."/>
            <person name="Latreille P."/>
            <person name="Leonard S."/>
            <person name="Meyer R."/>
            <person name="Mulvaney E."/>
            <person name="Ozersky P."/>
            <person name="Riley A."/>
            <person name="Strowmatt C."/>
            <person name="Wagner-McPherson C."/>
            <person name="Wollam A."/>
            <person name="Yoakum M."/>
            <person name="Bell M."/>
            <person name="Dedhia N."/>
            <person name="Parnell L."/>
            <person name="Shah R."/>
            <person name="Rodriguez M."/>
            <person name="Hoon See L."/>
            <person name="Vil D."/>
            <person name="Baker J."/>
            <person name="Kirchoff K."/>
            <person name="Toth K."/>
            <person name="King L."/>
            <person name="Bahret A."/>
            <person name="Miller B."/>
            <person name="Marra M.A."/>
            <person name="Martienssen R."/>
            <person name="McCombie W.R."/>
            <person name="Wilson R.K."/>
            <person name="Murphy G."/>
            <person name="Bancroft I."/>
            <person name="Volckaert G."/>
            <person name="Wambutt R."/>
            <person name="Duesterhoeft A."/>
            <person name="Stiekema W."/>
            <person name="Pohl T."/>
            <person name="Entian K.-D."/>
            <person name="Terryn N."/>
            <person name="Hartley N."/>
            <person name="Bent E."/>
            <person name="Johnson S."/>
            <person name="Langham S.-A."/>
            <person name="McCullagh B."/>
            <person name="Robben J."/>
            <person name="Grymonprez B."/>
            <person name="Zimmermann W."/>
            <person name="Ramsperger U."/>
            <person name="Wedler H."/>
            <person name="Balke K."/>
            <person name="Wedler E."/>
            <person name="Peters S."/>
            <person name="van Staveren M."/>
            <person name="Dirkse W."/>
            <person name="Mooijman P."/>
            <person name="Klein Lankhorst R."/>
            <person name="Weitzenegger T."/>
            <person name="Bothe G."/>
            <person name="Rose M."/>
            <person name="Hauf J."/>
            <person name="Berneiser S."/>
            <person name="Hempel S."/>
            <person name="Feldpausch M."/>
            <person name="Lamberth S."/>
            <person name="Villarroel R."/>
            <person name="Gielen J."/>
            <person name="Ardiles W."/>
            <person name="Bents O."/>
            <person name="Lemcke K."/>
            <person name="Kolesov G."/>
            <person name="Mayer K.F.X."/>
            <person name="Rudd S."/>
            <person name="Schoof H."/>
            <person name="Schueller C."/>
            <person name="Zaccaria P."/>
            <person name="Mewes H.-W."/>
            <person name="Bevan M."/>
            <person name="Fransz P.F."/>
        </authorList>
    </citation>
    <scope>NUCLEOTIDE SEQUENCE [LARGE SCALE GENOMIC DNA]</scope>
    <source>
        <strain>cv. Columbia</strain>
    </source>
</reference>
<reference key="2">
    <citation type="journal article" date="2017" name="Plant J.">
        <title>Araport11: a complete reannotation of the Arabidopsis thaliana reference genome.</title>
        <authorList>
            <person name="Cheng C.Y."/>
            <person name="Krishnakumar V."/>
            <person name="Chan A.P."/>
            <person name="Thibaud-Nissen F."/>
            <person name="Schobel S."/>
            <person name="Town C.D."/>
        </authorList>
    </citation>
    <scope>GENOME REANNOTATION</scope>
    <source>
        <strain>cv. Columbia</strain>
    </source>
</reference>
<reference key="3">
    <citation type="submission" date="2002-03" db="EMBL/GenBank/DDBJ databases">
        <title>Full-length cDNA from Arabidopsis thaliana.</title>
        <authorList>
            <person name="Brover V.V."/>
            <person name="Troukhan M.E."/>
            <person name="Alexandrov N.A."/>
            <person name="Lu Y.-P."/>
            <person name="Flavell R.B."/>
            <person name="Feldmann K.A."/>
        </authorList>
    </citation>
    <scope>NUCLEOTIDE SEQUENCE [LARGE SCALE MRNA]</scope>
</reference>
<reference key="4">
    <citation type="journal article" date="2007" name="Plant J.">
        <title>Arabidopsis ESK1 encodes a novel regulator of freezing tolerance.</title>
        <authorList>
            <person name="Xin Z."/>
            <person name="Mandaokar A."/>
            <person name="Chen J."/>
            <person name="Last R.L."/>
            <person name="Browse J."/>
        </authorList>
    </citation>
    <scope>GENE FAMILY</scope>
    <source>
        <strain>cv. Columbia</strain>
    </source>
</reference>
<reference key="5">
    <citation type="journal article" date="2010" name="Plant Physiol.">
        <title>TRICHOME BIREFRINGENCE and its homolog AT5G01360 encode plant-specific DUF231 proteins required for cellulose biosynthesis in Arabidopsis.</title>
        <authorList>
            <person name="Bischoff V."/>
            <person name="Nita S."/>
            <person name="Neumetzler L."/>
            <person name="Schindelasch D."/>
            <person name="Urbain A."/>
            <person name="Eshed R."/>
            <person name="Persson S."/>
            <person name="Delmer D."/>
            <person name="Scheible W.R."/>
        </authorList>
    </citation>
    <scope>GENE FAMILY</scope>
    <scope>NOMENCLATURE</scope>
</reference>
<reference key="6">
    <citation type="journal article" date="2010" name="Plant Signal. Behav.">
        <title>Involvement of TBL/DUF231 proteins into cell wall biology.</title>
        <authorList>
            <person name="Bischoff V."/>
            <person name="Selbig J."/>
            <person name="Scheible W.R."/>
        </authorList>
    </citation>
    <scope>3D-STRUCTURE MODELING</scope>
</reference>
<proteinExistence type="evidence at transcript level"/>
<sequence>MSTSSSFPRTIVSYTVTTSLFIVIFLCSVFFFTRRTLEPSLSPYHTADIPLPAVDLPPPTPLLPQIEPHDGDVTVETNPKEVEDSRRGGDDVAVETELKLKDVEDSHTEKTEEEEEGRGESPGEVSVESVEHAVIEKMRGCDLYKGSWVKGDDEYPLYQPGSCPYVDDAFDCQRNGRRDSDYLNWRWKPDGCDLPRFNATDFLVKLRGKSLMLVGDSMNRNQFESMLCVLREGLSDKSRMYEVHGHNITKGRGYFVFKFEDYNCTVEFVRSHFLVREGVRANAQGNTNPTLSIDRIDKSHAKWKRADILVFNTGHWWVHGKTARGKNYYKEGDYIYPKFDATEAYRRSLKTWAKWIDQNVNPKKQLVFYRGYSSAHFRGGEWDSGGSCNGEVEPVKKGSIIDSYPLKMKIVQEAIKEMQVPVILLNVTKLTNFRKDGHPSIYGKTNTDGKKVSTRRQDCSHWCLPGVPDVWNHLIYASLLLQPHS</sequence>
<protein>
    <recommendedName>
        <fullName>Protein trichome birefringence-like 5</fullName>
    </recommendedName>
</protein>
<organism>
    <name type="scientific">Arabidopsis thaliana</name>
    <name type="common">Mouse-ear cress</name>
    <dbReference type="NCBI Taxonomy" id="3702"/>
    <lineage>
        <taxon>Eukaryota</taxon>
        <taxon>Viridiplantae</taxon>
        <taxon>Streptophyta</taxon>
        <taxon>Embryophyta</taxon>
        <taxon>Tracheophyta</taxon>
        <taxon>Spermatophyta</taxon>
        <taxon>Magnoliopsida</taxon>
        <taxon>eudicotyledons</taxon>
        <taxon>Gunneridae</taxon>
        <taxon>Pentapetalae</taxon>
        <taxon>rosids</taxon>
        <taxon>malvids</taxon>
        <taxon>Brassicales</taxon>
        <taxon>Brassicaceae</taxon>
        <taxon>Camelineae</taxon>
        <taxon>Arabidopsis</taxon>
    </lineage>
</organism>
<evidence type="ECO:0000250" key="1">
    <source>
        <dbReference type="UniProtKB" id="Q9FG35"/>
    </source>
</evidence>
<evidence type="ECO:0000250" key="2">
    <source>
        <dbReference type="UniProtKB" id="Q9LY46"/>
    </source>
</evidence>
<evidence type="ECO:0000255" key="3"/>
<evidence type="ECO:0000256" key="4">
    <source>
        <dbReference type="SAM" id="MobiDB-lite"/>
    </source>
</evidence>
<evidence type="ECO:0000305" key="5"/>
<evidence type="ECO:0000305" key="6">
    <source>
    </source>
</evidence>
<name>TBL5_ARATH</name>
<gene>
    <name type="primary">TBL5</name>
    <name type="ordered locus">At5g20590</name>
    <name type="ORF">F7C8.180</name>
</gene>
<feature type="chain" id="PRO_0000425371" description="Protein trichome birefringence-like 5">
    <location>
        <begin position="1"/>
        <end position="485"/>
    </location>
</feature>
<feature type="transmembrane region" description="Helical; Signal-anchor for type II membrane protein" evidence="3">
    <location>
        <begin position="11"/>
        <end position="31"/>
    </location>
</feature>
<feature type="region of interest" description="Disordered" evidence="4">
    <location>
        <begin position="65"/>
        <end position="127"/>
    </location>
</feature>
<feature type="short sequence motif" description="GDS motif">
    <location>
        <begin position="215"/>
        <end position="217"/>
    </location>
</feature>
<feature type="short sequence motif" description="DCXHWCLPGXXDXWN motif">
    <location>
        <begin position="458"/>
        <end position="472"/>
    </location>
</feature>
<feature type="compositionally biased region" description="Basic and acidic residues" evidence="4">
    <location>
        <begin position="67"/>
        <end position="110"/>
    </location>
</feature>
<feature type="sequence conflict" description="In Ref. 3; AAM64322." evidence="5" ref="3">
    <original>F</original>
    <variation>L</variation>
    <location>
        <position position="32"/>
    </location>
</feature>
<feature type="sequence conflict" description="In Ref. 3; AAM64322." evidence="5" ref="3">
    <original>P</original>
    <variation>S</variation>
    <location>
        <position position="52"/>
    </location>
</feature>
<feature type="sequence conflict" description="In Ref. 3; AAM64322." evidence="5" ref="3">
    <original>P</original>
    <variation>Q</variation>
    <location>
        <position position="79"/>
    </location>
</feature>
<feature type="sequence conflict" description="In Ref. 3; AAM64322." evidence="5" ref="3">
    <original>K</original>
    <variation>R</variation>
    <location>
        <position position="145"/>
    </location>
</feature>
<feature type="sequence conflict" description="In Ref. 3; AAM64322." evidence="5" ref="3">
    <original>G</original>
    <variation>D</variation>
    <location>
        <position position="151"/>
    </location>
</feature>
<accession>F4K5K4</accession>
<accession>Q8LD24</accession>
<dbReference type="EMBL" id="AF296833">
    <property type="status" value="NOT_ANNOTATED_CDS"/>
    <property type="molecule type" value="Genomic_DNA"/>
</dbReference>
<dbReference type="EMBL" id="CP002688">
    <property type="protein sequence ID" value="AED92864.1"/>
    <property type="molecule type" value="Genomic_DNA"/>
</dbReference>
<dbReference type="EMBL" id="AY086247">
    <property type="protein sequence ID" value="AAM64322.1"/>
    <property type="molecule type" value="mRNA"/>
</dbReference>
<dbReference type="RefSeq" id="NP_197559.1">
    <property type="nucleotide sequence ID" value="NM_122066.4"/>
</dbReference>
<dbReference type="SMR" id="F4K5K4"/>
<dbReference type="FunCoup" id="F4K5K4">
    <property type="interactions" value="347"/>
</dbReference>
<dbReference type="STRING" id="3702.F4K5K4"/>
<dbReference type="GlyGen" id="F4K5K4">
    <property type="glycosylation" value="1 site"/>
</dbReference>
<dbReference type="PaxDb" id="3702-AT5G20590.1"/>
<dbReference type="ProteomicsDB" id="234185"/>
<dbReference type="EnsemblPlants" id="AT5G20590.1">
    <property type="protein sequence ID" value="AT5G20590.1"/>
    <property type="gene ID" value="AT5G20590"/>
</dbReference>
<dbReference type="GeneID" id="832181"/>
<dbReference type="Gramene" id="AT5G20590.1">
    <property type="protein sequence ID" value="AT5G20590.1"/>
    <property type="gene ID" value="AT5G20590"/>
</dbReference>
<dbReference type="KEGG" id="ath:AT5G20590"/>
<dbReference type="Araport" id="AT5G20590"/>
<dbReference type="TAIR" id="AT5G20590">
    <property type="gene designation" value="TBL5"/>
</dbReference>
<dbReference type="eggNOG" id="ENOG502QQD3">
    <property type="taxonomic scope" value="Eukaryota"/>
</dbReference>
<dbReference type="HOGENOM" id="CLU_020953_5_3_1"/>
<dbReference type="InParanoid" id="F4K5K4"/>
<dbReference type="OMA" id="DGEWARD"/>
<dbReference type="OrthoDB" id="630188at2759"/>
<dbReference type="PRO" id="PR:F4K5K4"/>
<dbReference type="Proteomes" id="UP000006548">
    <property type="component" value="Chromosome 5"/>
</dbReference>
<dbReference type="ExpressionAtlas" id="F4K5K4">
    <property type="expression patterns" value="baseline and differential"/>
</dbReference>
<dbReference type="GO" id="GO:0016020">
    <property type="term" value="C:membrane"/>
    <property type="evidence" value="ECO:0007669"/>
    <property type="project" value="UniProtKB-SubCell"/>
</dbReference>
<dbReference type="GO" id="GO:0016413">
    <property type="term" value="F:O-acetyltransferase activity"/>
    <property type="evidence" value="ECO:0007669"/>
    <property type="project" value="InterPro"/>
</dbReference>
<dbReference type="InterPro" id="IPR029962">
    <property type="entry name" value="TBL"/>
</dbReference>
<dbReference type="InterPro" id="IPR026057">
    <property type="entry name" value="TBL_C"/>
</dbReference>
<dbReference type="InterPro" id="IPR025846">
    <property type="entry name" value="TBL_N"/>
</dbReference>
<dbReference type="PANTHER" id="PTHR32285:SF8">
    <property type="entry name" value="PROTEIN TRICHOME BIREFRINGENCE-LIKE 5"/>
    <property type="match status" value="1"/>
</dbReference>
<dbReference type="PANTHER" id="PTHR32285">
    <property type="entry name" value="PROTEIN TRICHOME BIREFRINGENCE-LIKE 9-RELATED"/>
    <property type="match status" value="1"/>
</dbReference>
<dbReference type="Pfam" id="PF13839">
    <property type="entry name" value="PC-Esterase"/>
    <property type="match status" value="1"/>
</dbReference>
<dbReference type="Pfam" id="PF14416">
    <property type="entry name" value="PMR5N"/>
    <property type="match status" value="1"/>
</dbReference>